<sequence length="292" mass="32721">MNKDIATPIRTKEILKKYGFSFKKSLGQNFLIDTNILNRIVDHAEVTEKTGVIEIGPGIGALTEQLAKRAKKVVAFEIDQRLLPILKDTLSPYENVTVIHQDVLKADVKSVIEEQFQDCDEIMVVANLPYYVTTPIIMKLLEEHLPLKGIVVMLQKEVAERMAADPSSKEYGSLSIAVQFYTEAKTVMIVPKTVFVPQPNVDSAVIRLILRDGPAVDVENESFFFQLIKASFAQRRKTLLNNLVNNLPEGKAQKSTIEQVLEETNIDGKRRGESLSIEEFAALSNGLYKALF</sequence>
<organism>
    <name type="scientific">Bacillus subtilis (strain 168)</name>
    <dbReference type="NCBI Taxonomy" id="224308"/>
    <lineage>
        <taxon>Bacteria</taxon>
        <taxon>Bacillati</taxon>
        <taxon>Bacillota</taxon>
        <taxon>Bacilli</taxon>
        <taxon>Bacillales</taxon>
        <taxon>Bacillaceae</taxon>
        <taxon>Bacillus</taxon>
    </lineage>
</organism>
<evidence type="ECO:0000255" key="1">
    <source>
        <dbReference type="HAMAP-Rule" id="MF_00607"/>
    </source>
</evidence>
<evidence type="ECO:0000269" key="2">
    <source>
    </source>
</evidence>
<evidence type="ECO:0007829" key="3">
    <source>
        <dbReference type="PDB" id="6IFS"/>
    </source>
</evidence>
<evidence type="ECO:0007829" key="4">
    <source>
        <dbReference type="PDB" id="6IFT"/>
    </source>
</evidence>
<evidence type="ECO:0007829" key="5">
    <source>
        <dbReference type="PDB" id="6IFW"/>
    </source>
</evidence>
<evidence type="ECO:0007829" key="6">
    <source>
        <dbReference type="PDB" id="7V2P"/>
    </source>
</evidence>
<evidence type="ECO:0007829" key="7">
    <source>
        <dbReference type="PDB" id="7V2Q"/>
    </source>
</evidence>
<gene>
    <name evidence="1" type="primary">rsmA</name>
    <name evidence="1" type="synonym">ksgA</name>
    <name type="ordered locus">BSU00420</name>
</gene>
<proteinExistence type="evidence at protein level"/>
<accession>P37468</accession>
<name>RSMA_BACSU</name>
<protein>
    <recommendedName>
        <fullName evidence="1">Ribosomal RNA small subunit methyltransferase A</fullName>
        <ecNumber evidence="1">2.1.1.182</ecNumber>
    </recommendedName>
    <alternativeName>
        <fullName evidence="1">16S rRNA (adenine(1518)-N(6)/adenine(1519)-N(6))-dimethyltransferase</fullName>
    </alternativeName>
    <alternativeName>
        <fullName evidence="1">16S rRNA dimethyladenosine transferase</fullName>
    </alternativeName>
    <alternativeName>
        <fullName evidence="1">16S rRNA dimethylase</fullName>
    </alternativeName>
    <alternativeName>
        <fullName evidence="1">S-adenosylmethionine-6-N', N'-adenosyl(rRNA) dimethyltransferase</fullName>
    </alternativeName>
</protein>
<reference key="1">
    <citation type="journal article" date="1994" name="DNA Res.">
        <title>Systematic sequencing of the 180 kilobase region of the Bacillus subtilis chromosome containing the replication origin.</title>
        <authorList>
            <person name="Ogasawara N."/>
            <person name="Nakai S."/>
            <person name="Yoshikawa H."/>
        </authorList>
    </citation>
    <scope>NUCLEOTIDE SEQUENCE [GENOMIC DNA]</scope>
    <source>
        <strain>168</strain>
    </source>
</reference>
<reference key="2">
    <citation type="journal article" date="1997" name="Nature">
        <title>The complete genome sequence of the Gram-positive bacterium Bacillus subtilis.</title>
        <authorList>
            <person name="Kunst F."/>
            <person name="Ogasawara N."/>
            <person name="Moszer I."/>
            <person name="Albertini A.M."/>
            <person name="Alloni G."/>
            <person name="Azevedo V."/>
            <person name="Bertero M.G."/>
            <person name="Bessieres P."/>
            <person name="Bolotin A."/>
            <person name="Borchert S."/>
            <person name="Borriss R."/>
            <person name="Boursier L."/>
            <person name="Brans A."/>
            <person name="Braun M."/>
            <person name="Brignell S.C."/>
            <person name="Bron S."/>
            <person name="Brouillet S."/>
            <person name="Bruschi C.V."/>
            <person name="Caldwell B."/>
            <person name="Capuano V."/>
            <person name="Carter N.M."/>
            <person name="Choi S.-K."/>
            <person name="Codani J.-J."/>
            <person name="Connerton I.F."/>
            <person name="Cummings N.J."/>
            <person name="Daniel R.A."/>
            <person name="Denizot F."/>
            <person name="Devine K.M."/>
            <person name="Duesterhoeft A."/>
            <person name="Ehrlich S.D."/>
            <person name="Emmerson P.T."/>
            <person name="Entian K.-D."/>
            <person name="Errington J."/>
            <person name="Fabret C."/>
            <person name="Ferrari E."/>
            <person name="Foulger D."/>
            <person name="Fritz C."/>
            <person name="Fujita M."/>
            <person name="Fujita Y."/>
            <person name="Fuma S."/>
            <person name="Galizzi A."/>
            <person name="Galleron N."/>
            <person name="Ghim S.-Y."/>
            <person name="Glaser P."/>
            <person name="Goffeau A."/>
            <person name="Golightly E.J."/>
            <person name="Grandi G."/>
            <person name="Guiseppi G."/>
            <person name="Guy B.J."/>
            <person name="Haga K."/>
            <person name="Haiech J."/>
            <person name="Harwood C.R."/>
            <person name="Henaut A."/>
            <person name="Hilbert H."/>
            <person name="Holsappel S."/>
            <person name="Hosono S."/>
            <person name="Hullo M.-F."/>
            <person name="Itaya M."/>
            <person name="Jones L.-M."/>
            <person name="Joris B."/>
            <person name="Karamata D."/>
            <person name="Kasahara Y."/>
            <person name="Klaerr-Blanchard M."/>
            <person name="Klein C."/>
            <person name="Kobayashi Y."/>
            <person name="Koetter P."/>
            <person name="Koningstein G."/>
            <person name="Krogh S."/>
            <person name="Kumano M."/>
            <person name="Kurita K."/>
            <person name="Lapidus A."/>
            <person name="Lardinois S."/>
            <person name="Lauber J."/>
            <person name="Lazarevic V."/>
            <person name="Lee S.-M."/>
            <person name="Levine A."/>
            <person name="Liu H."/>
            <person name="Masuda S."/>
            <person name="Mauel C."/>
            <person name="Medigue C."/>
            <person name="Medina N."/>
            <person name="Mellado R.P."/>
            <person name="Mizuno M."/>
            <person name="Moestl D."/>
            <person name="Nakai S."/>
            <person name="Noback M."/>
            <person name="Noone D."/>
            <person name="O'Reilly M."/>
            <person name="Ogawa K."/>
            <person name="Ogiwara A."/>
            <person name="Oudega B."/>
            <person name="Park S.-H."/>
            <person name="Parro V."/>
            <person name="Pohl T.M."/>
            <person name="Portetelle D."/>
            <person name="Porwollik S."/>
            <person name="Prescott A.M."/>
            <person name="Presecan E."/>
            <person name="Pujic P."/>
            <person name="Purnelle B."/>
            <person name="Rapoport G."/>
            <person name="Rey M."/>
            <person name="Reynolds S."/>
            <person name="Rieger M."/>
            <person name="Rivolta C."/>
            <person name="Rocha E."/>
            <person name="Roche B."/>
            <person name="Rose M."/>
            <person name="Sadaie Y."/>
            <person name="Sato T."/>
            <person name="Scanlan E."/>
            <person name="Schleich S."/>
            <person name="Schroeter R."/>
            <person name="Scoffone F."/>
            <person name="Sekiguchi J."/>
            <person name="Sekowska A."/>
            <person name="Seror S.J."/>
            <person name="Serror P."/>
            <person name="Shin B.-S."/>
            <person name="Soldo B."/>
            <person name="Sorokin A."/>
            <person name="Tacconi E."/>
            <person name="Takagi T."/>
            <person name="Takahashi H."/>
            <person name="Takemaru K."/>
            <person name="Takeuchi M."/>
            <person name="Tamakoshi A."/>
            <person name="Tanaka T."/>
            <person name="Terpstra P."/>
            <person name="Tognoni A."/>
            <person name="Tosato V."/>
            <person name="Uchiyama S."/>
            <person name="Vandenbol M."/>
            <person name="Vannier F."/>
            <person name="Vassarotti A."/>
            <person name="Viari A."/>
            <person name="Wambutt R."/>
            <person name="Wedler E."/>
            <person name="Wedler H."/>
            <person name="Weitzenegger T."/>
            <person name="Winters P."/>
            <person name="Wipat A."/>
            <person name="Yamamoto H."/>
            <person name="Yamane K."/>
            <person name="Yasumoto K."/>
            <person name="Yata K."/>
            <person name="Yoshida K."/>
            <person name="Yoshikawa H.-F."/>
            <person name="Zumstein E."/>
            <person name="Yoshikawa H."/>
            <person name="Danchin A."/>
        </authorList>
    </citation>
    <scope>NUCLEOTIDE SEQUENCE [LARGE SCALE GENOMIC DNA]</scope>
    <source>
        <strain>168</strain>
    </source>
</reference>
<reference key="3">
    <citation type="journal article" date="2001" name="RNA">
        <title>Identification of the gene encoding the 5S ribosomal RNA maturase in Bacillus subtilis: mature 5S rRNA is dispensable for ribosome function.</title>
        <authorList>
            <person name="Condon C."/>
            <person name="Brechemier-Baey D."/>
            <person name="Beltchev B."/>
            <person name="Grunberg-Manago M."/>
            <person name="Putzer H."/>
        </authorList>
    </citation>
    <scope>DISRUPTION PHENOTYPE</scope>
    <source>
        <strain>168</strain>
    </source>
</reference>
<keyword id="KW-0002">3D-structure</keyword>
<keyword id="KW-0963">Cytoplasm</keyword>
<keyword id="KW-0489">Methyltransferase</keyword>
<keyword id="KW-1185">Reference proteome</keyword>
<keyword id="KW-0694">RNA-binding</keyword>
<keyword id="KW-0698">rRNA processing</keyword>
<keyword id="KW-0949">S-adenosyl-L-methionine</keyword>
<keyword id="KW-0808">Transferase</keyword>
<comment type="function">
    <text evidence="1">Specifically dimethylates two adjacent adenosines (A1518 and A1519) in the loop of a conserved hairpin near the 3'-end of 16S rRNA in the 30S particle. May play a critical role in biogenesis of 30S subunits.</text>
</comment>
<comment type="catalytic activity">
    <reaction evidence="1">
        <text>adenosine(1518)/adenosine(1519) in 16S rRNA + 4 S-adenosyl-L-methionine = N(6)-dimethyladenosine(1518)/N(6)-dimethyladenosine(1519) in 16S rRNA + 4 S-adenosyl-L-homocysteine + 4 H(+)</text>
        <dbReference type="Rhea" id="RHEA:19609"/>
        <dbReference type="Rhea" id="RHEA-COMP:10232"/>
        <dbReference type="Rhea" id="RHEA-COMP:10233"/>
        <dbReference type="ChEBI" id="CHEBI:15378"/>
        <dbReference type="ChEBI" id="CHEBI:57856"/>
        <dbReference type="ChEBI" id="CHEBI:59789"/>
        <dbReference type="ChEBI" id="CHEBI:74411"/>
        <dbReference type="ChEBI" id="CHEBI:74493"/>
        <dbReference type="EC" id="2.1.1.182"/>
    </reaction>
</comment>
<comment type="subcellular location">
    <subcellularLocation>
        <location evidence="1">Cytoplasm</location>
    </subcellularLocation>
</comment>
<comment type="disruption phenotype">
    <text evidence="2">No visible phenotype. Not essential.</text>
</comment>
<comment type="similarity">
    <text evidence="1">Belongs to the class I-like SAM-binding methyltransferase superfamily. rRNA adenine N(6)-methyltransferase family. RsmA subfamily.</text>
</comment>
<feature type="chain" id="PRO_0000101485" description="Ribosomal RNA small subunit methyltransferase A">
    <location>
        <begin position="1"/>
        <end position="292"/>
    </location>
</feature>
<feature type="binding site" evidence="1">
    <location>
        <position position="29"/>
    </location>
    <ligand>
        <name>S-adenosyl-L-methionine</name>
        <dbReference type="ChEBI" id="CHEBI:59789"/>
    </ligand>
</feature>
<feature type="binding site" evidence="1">
    <location>
        <position position="31"/>
    </location>
    <ligand>
        <name>S-adenosyl-L-methionine</name>
        <dbReference type="ChEBI" id="CHEBI:59789"/>
    </ligand>
</feature>
<feature type="binding site" evidence="1">
    <location>
        <position position="56"/>
    </location>
    <ligand>
        <name>S-adenosyl-L-methionine</name>
        <dbReference type="ChEBI" id="CHEBI:59789"/>
    </ligand>
</feature>
<feature type="binding site" evidence="1">
    <location>
        <position position="77"/>
    </location>
    <ligand>
        <name>S-adenosyl-L-methionine</name>
        <dbReference type="ChEBI" id="CHEBI:59789"/>
    </ligand>
</feature>
<feature type="binding site" evidence="1">
    <location>
        <position position="102"/>
    </location>
    <ligand>
        <name>S-adenosyl-L-methionine</name>
        <dbReference type="ChEBI" id="CHEBI:59789"/>
    </ligand>
</feature>
<feature type="binding site" evidence="1">
    <location>
        <position position="127"/>
    </location>
    <ligand>
        <name>S-adenosyl-L-methionine</name>
        <dbReference type="ChEBI" id="CHEBI:59789"/>
    </ligand>
</feature>
<feature type="strand" evidence="3">
    <location>
        <begin position="5"/>
        <end position="7"/>
    </location>
</feature>
<feature type="helix" evidence="4">
    <location>
        <begin position="8"/>
        <end position="18"/>
    </location>
</feature>
<feature type="helix" evidence="3">
    <location>
        <begin position="19"/>
        <end position="21"/>
    </location>
</feature>
<feature type="helix" evidence="4">
    <location>
        <begin position="24"/>
        <end position="26"/>
    </location>
</feature>
<feature type="helix" evidence="4">
    <location>
        <begin position="34"/>
        <end position="43"/>
    </location>
</feature>
<feature type="strand" evidence="4">
    <location>
        <begin position="50"/>
        <end position="55"/>
    </location>
</feature>
<feature type="turn" evidence="5">
    <location>
        <begin position="58"/>
        <end position="60"/>
    </location>
</feature>
<feature type="helix" evidence="4">
    <location>
        <begin position="61"/>
        <end position="69"/>
    </location>
</feature>
<feature type="strand" evidence="4">
    <location>
        <begin position="71"/>
        <end position="77"/>
    </location>
</feature>
<feature type="helix" evidence="4">
    <location>
        <begin position="82"/>
        <end position="89"/>
    </location>
</feature>
<feature type="turn" evidence="4">
    <location>
        <begin position="90"/>
        <end position="92"/>
    </location>
</feature>
<feature type="strand" evidence="4">
    <location>
        <begin position="94"/>
        <end position="101"/>
    </location>
</feature>
<feature type="helix" evidence="4">
    <location>
        <begin position="103"/>
        <end position="105"/>
    </location>
</feature>
<feature type="helix" evidence="4">
    <location>
        <begin position="108"/>
        <end position="115"/>
    </location>
</feature>
<feature type="strand" evidence="6">
    <location>
        <begin position="117"/>
        <end position="119"/>
    </location>
</feature>
<feature type="strand" evidence="4">
    <location>
        <begin position="120"/>
        <end position="127"/>
    </location>
</feature>
<feature type="helix" evidence="4">
    <location>
        <begin position="130"/>
        <end position="132"/>
    </location>
</feature>
<feature type="helix" evidence="4">
    <location>
        <begin position="133"/>
        <end position="142"/>
    </location>
</feature>
<feature type="strand" evidence="4">
    <location>
        <begin position="148"/>
        <end position="155"/>
    </location>
</feature>
<feature type="helix" evidence="4">
    <location>
        <begin position="156"/>
        <end position="162"/>
    </location>
</feature>
<feature type="strand" evidence="7">
    <location>
        <begin position="166"/>
        <end position="170"/>
    </location>
</feature>
<feature type="helix" evidence="4">
    <location>
        <begin position="173"/>
        <end position="181"/>
    </location>
</feature>
<feature type="strand" evidence="4">
    <location>
        <begin position="182"/>
        <end position="190"/>
    </location>
</feature>
<feature type="helix" evidence="4">
    <location>
        <begin position="192"/>
        <end position="194"/>
    </location>
</feature>
<feature type="strand" evidence="4">
    <location>
        <begin position="195"/>
        <end position="197"/>
    </location>
</feature>
<feature type="strand" evidence="4">
    <location>
        <begin position="203"/>
        <end position="210"/>
    </location>
</feature>
<feature type="helix" evidence="4">
    <location>
        <begin position="221"/>
        <end position="231"/>
    </location>
</feature>
<feature type="turn" evidence="3">
    <location>
        <begin position="233"/>
        <end position="236"/>
    </location>
</feature>
<feature type="helix" evidence="4">
    <location>
        <begin position="239"/>
        <end position="246"/>
    </location>
</feature>
<feature type="turn" evidence="4">
    <location>
        <begin position="248"/>
        <end position="252"/>
    </location>
</feature>
<feature type="helix" evidence="4">
    <location>
        <begin position="254"/>
        <end position="263"/>
    </location>
</feature>
<feature type="strand" evidence="7">
    <location>
        <begin position="268"/>
        <end position="270"/>
    </location>
</feature>
<feature type="helix" evidence="4">
    <location>
        <begin position="272"/>
        <end position="274"/>
    </location>
</feature>
<feature type="helix" evidence="4">
    <location>
        <begin position="277"/>
        <end position="291"/>
    </location>
</feature>
<dbReference type="EC" id="2.1.1.182" evidence="1"/>
<dbReference type="EMBL" id="D26185">
    <property type="protein sequence ID" value="BAA05277.1"/>
    <property type="molecule type" value="Genomic_DNA"/>
</dbReference>
<dbReference type="EMBL" id="AL009126">
    <property type="protein sequence ID" value="CAB11818.1"/>
    <property type="molecule type" value="Genomic_DNA"/>
</dbReference>
<dbReference type="PIR" id="S66071">
    <property type="entry name" value="S66071"/>
</dbReference>
<dbReference type="RefSeq" id="NP_387923.1">
    <property type="nucleotide sequence ID" value="NC_000964.3"/>
</dbReference>
<dbReference type="RefSeq" id="WP_003226751.1">
    <property type="nucleotide sequence ID" value="NZ_OZ025638.1"/>
</dbReference>
<dbReference type="PDB" id="6IFS">
    <property type="method" value="X-ray"/>
    <property type="resolution" value="2.27 A"/>
    <property type="chains" value="A/B=1-292"/>
</dbReference>
<dbReference type="PDB" id="6IFT">
    <property type="method" value="X-ray"/>
    <property type="resolution" value="1.90 A"/>
    <property type="chains" value="A=1-292"/>
</dbReference>
<dbReference type="PDB" id="6IFV">
    <property type="method" value="X-ray"/>
    <property type="resolution" value="3.11 A"/>
    <property type="chains" value="A/B=1-215"/>
</dbReference>
<dbReference type="PDB" id="6IFW">
    <property type="method" value="X-ray"/>
    <property type="resolution" value="2.95 A"/>
    <property type="chains" value="A/B=27-292"/>
</dbReference>
<dbReference type="PDB" id="7V2L">
    <property type="method" value="EM"/>
    <property type="resolution" value="3.30 A"/>
    <property type="chains" value="W=1-292"/>
</dbReference>
<dbReference type="PDB" id="7V2M">
    <property type="method" value="EM"/>
    <property type="resolution" value="3.40 A"/>
    <property type="chains" value="U/W=1-292"/>
</dbReference>
<dbReference type="PDB" id="7V2N">
    <property type="method" value="EM"/>
    <property type="resolution" value="3.60 A"/>
    <property type="chains" value="U=1-292"/>
</dbReference>
<dbReference type="PDB" id="7V2O">
    <property type="method" value="EM"/>
    <property type="resolution" value="3.50 A"/>
    <property type="chains" value="U=1-292"/>
</dbReference>
<dbReference type="PDB" id="7V2P">
    <property type="method" value="EM"/>
    <property type="resolution" value="3.30 A"/>
    <property type="chains" value="U=1-292"/>
</dbReference>
<dbReference type="PDB" id="7V2Q">
    <property type="method" value="EM"/>
    <property type="resolution" value="3.24 A"/>
    <property type="chains" value="U/W=1-292"/>
</dbReference>
<dbReference type="PDBsum" id="6IFS"/>
<dbReference type="PDBsum" id="6IFT"/>
<dbReference type="PDBsum" id="6IFV"/>
<dbReference type="PDBsum" id="6IFW"/>
<dbReference type="PDBsum" id="7V2L"/>
<dbReference type="PDBsum" id="7V2M"/>
<dbReference type="PDBsum" id="7V2N"/>
<dbReference type="PDBsum" id="7V2O"/>
<dbReference type="PDBsum" id="7V2P"/>
<dbReference type="PDBsum" id="7V2Q"/>
<dbReference type="EMDB" id="EMD-31655"/>
<dbReference type="EMDB" id="EMD-31656"/>
<dbReference type="EMDB" id="EMD-31657"/>
<dbReference type="EMDB" id="EMD-31658"/>
<dbReference type="EMDB" id="EMD-31659"/>
<dbReference type="EMDB" id="EMD-31660"/>
<dbReference type="SMR" id="P37468"/>
<dbReference type="FunCoup" id="P37468">
    <property type="interactions" value="677"/>
</dbReference>
<dbReference type="STRING" id="224308.BSU00420"/>
<dbReference type="PaxDb" id="224308-BSU00420"/>
<dbReference type="EnsemblBacteria" id="CAB11818">
    <property type="protein sequence ID" value="CAB11818"/>
    <property type="gene ID" value="BSU_00420"/>
</dbReference>
<dbReference type="GeneID" id="936358"/>
<dbReference type="KEGG" id="bsu:BSU00420"/>
<dbReference type="PATRIC" id="fig|224308.179.peg.42"/>
<dbReference type="eggNOG" id="COG0030">
    <property type="taxonomic scope" value="Bacteria"/>
</dbReference>
<dbReference type="InParanoid" id="P37468"/>
<dbReference type="OrthoDB" id="9814755at2"/>
<dbReference type="PhylomeDB" id="P37468"/>
<dbReference type="BioCyc" id="BSUB:BSU00420-MONOMER"/>
<dbReference type="Proteomes" id="UP000001570">
    <property type="component" value="Chromosome"/>
</dbReference>
<dbReference type="GO" id="GO:0005829">
    <property type="term" value="C:cytosol"/>
    <property type="evidence" value="ECO:0000318"/>
    <property type="project" value="GO_Central"/>
</dbReference>
<dbReference type="GO" id="GO:0052908">
    <property type="term" value="F:16S rRNA (adenine(1518)-N(6)/adenine(1519)-N(6))-dimethyltransferase activity"/>
    <property type="evidence" value="ECO:0007669"/>
    <property type="project" value="UniProtKB-EC"/>
</dbReference>
<dbReference type="GO" id="GO:0003723">
    <property type="term" value="F:RNA binding"/>
    <property type="evidence" value="ECO:0007669"/>
    <property type="project" value="UniProtKB-KW"/>
</dbReference>
<dbReference type="GO" id="GO:0000179">
    <property type="term" value="F:rRNA (adenine-N6,N6-)-dimethyltransferase activity"/>
    <property type="evidence" value="ECO:0000318"/>
    <property type="project" value="GO_Central"/>
</dbReference>
<dbReference type="GO" id="GO:0031167">
    <property type="term" value="P:rRNA methylation"/>
    <property type="evidence" value="ECO:0000318"/>
    <property type="project" value="GO_Central"/>
</dbReference>
<dbReference type="CDD" id="cd02440">
    <property type="entry name" value="AdoMet_MTases"/>
    <property type="match status" value="1"/>
</dbReference>
<dbReference type="FunFam" id="1.10.8.100:FF:000002">
    <property type="entry name" value="Ribosomal RNA small subunit methyltransferase A"/>
    <property type="match status" value="1"/>
</dbReference>
<dbReference type="FunFam" id="3.40.50.150:FF:000023">
    <property type="entry name" value="Ribosomal RNA small subunit methyltransferase A"/>
    <property type="match status" value="1"/>
</dbReference>
<dbReference type="Gene3D" id="1.10.8.100">
    <property type="entry name" value="Ribosomal RNA adenine dimethylase-like, domain 2"/>
    <property type="match status" value="1"/>
</dbReference>
<dbReference type="Gene3D" id="3.40.50.150">
    <property type="entry name" value="Vaccinia Virus protein VP39"/>
    <property type="match status" value="1"/>
</dbReference>
<dbReference type="HAMAP" id="MF_00607">
    <property type="entry name" value="16SrRNA_methyltr_A"/>
    <property type="match status" value="1"/>
</dbReference>
<dbReference type="InterPro" id="IPR001737">
    <property type="entry name" value="KsgA/Erm"/>
</dbReference>
<dbReference type="InterPro" id="IPR023165">
    <property type="entry name" value="rRNA_Ade_diMease-like_C"/>
</dbReference>
<dbReference type="InterPro" id="IPR020596">
    <property type="entry name" value="rRNA_Ade_Mease_Trfase_CS"/>
</dbReference>
<dbReference type="InterPro" id="IPR020598">
    <property type="entry name" value="rRNA_Ade_methylase_Trfase_N"/>
</dbReference>
<dbReference type="InterPro" id="IPR011530">
    <property type="entry name" value="rRNA_adenine_dimethylase"/>
</dbReference>
<dbReference type="InterPro" id="IPR029063">
    <property type="entry name" value="SAM-dependent_MTases_sf"/>
</dbReference>
<dbReference type="NCBIfam" id="TIGR00755">
    <property type="entry name" value="ksgA"/>
    <property type="match status" value="1"/>
</dbReference>
<dbReference type="PANTHER" id="PTHR11727">
    <property type="entry name" value="DIMETHYLADENOSINE TRANSFERASE"/>
    <property type="match status" value="1"/>
</dbReference>
<dbReference type="PANTHER" id="PTHR11727:SF7">
    <property type="entry name" value="DIMETHYLADENOSINE TRANSFERASE-RELATED"/>
    <property type="match status" value="1"/>
</dbReference>
<dbReference type="Pfam" id="PF00398">
    <property type="entry name" value="RrnaAD"/>
    <property type="match status" value="1"/>
</dbReference>
<dbReference type="SMART" id="SM00650">
    <property type="entry name" value="rADc"/>
    <property type="match status" value="1"/>
</dbReference>
<dbReference type="SUPFAM" id="SSF53335">
    <property type="entry name" value="S-adenosyl-L-methionine-dependent methyltransferases"/>
    <property type="match status" value="1"/>
</dbReference>
<dbReference type="PROSITE" id="PS01131">
    <property type="entry name" value="RRNA_A_DIMETH"/>
    <property type="match status" value="1"/>
</dbReference>
<dbReference type="PROSITE" id="PS51689">
    <property type="entry name" value="SAM_RNA_A_N6_MT"/>
    <property type="match status" value="1"/>
</dbReference>